<proteinExistence type="evidence at transcript level"/>
<comment type="subcellular location">
    <subcellularLocation>
        <location evidence="2">Secreted</location>
    </subcellularLocation>
</comment>
<comment type="similarity">
    <text evidence="8">Belongs to the peptidase S8 family.</text>
</comment>
<keyword id="KW-0068">Autocatalytic cleavage</keyword>
<keyword id="KW-0325">Glycoprotein</keyword>
<keyword id="KW-0378">Hydrolase</keyword>
<keyword id="KW-0645">Protease</keyword>
<keyword id="KW-1185">Reference proteome</keyword>
<keyword id="KW-0964">Secreted</keyword>
<keyword id="KW-0720">Serine protease</keyword>
<keyword id="KW-0732">Signal</keyword>
<keyword id="KW-0865">Zymogen</keyword>
<name>SBT56_ARATH</name>
<gene>
    <name evidence="7" type="primary">SBT5.6</name>
    <name evidence="9" type="ordered locus">At5g45650</name>
    <name evidence="10" type="ORF">MRA19.5</name>
</gene>
<accession>Q9FK76</accession>
<dbReference type="EC" id="3.4.21.-" evidence="6"/>
<dbReference type="EMBL" id="AB012245">
    <property type="protein sequence ID" value="BAB09208.1"/>
    <property type="molecule type" value="Genomic_DNA"/>
</dbReference>
<dbReference type="EMBL" id="CP002688">
    <property type="protein sequence ID" value="AED95280.1"/>
    <property type="molecule type" value="Genomic_DNA"/>
</dbReference>
<dbReference type="EMBL" id="CP002688">
    <property type="protein sequence ID" value="ANM70243.1"/>
    <property type="molecule type" value="Genomic_DNA"/>
</dbReference>
<dbReference type="EMBL" id="AK118053">
    <property type="protein sequence ID" value="BAC42684.1"/>
    <property type="molecule type" value="mRNA"/>
</dbReference>
<dbReference type="EMBL" id="BT005679">
    <property type="protein sequence ID" value="AAO64099.1"/>
    <property type="molecule type" value="mRNA"/>
</dbReference>
<dbReference type="RefSeq" id="NP_001318744.1">
    <property type="nucleotide sequence ID" value="NM_001344636.1"/>
</dbReference>
<dbReference type="RefSeq" id="NP_199378.1">
    <property type="nucleotide sequence ID" value="NM_123933.3"/>
</dbReference>
<dbReference type="SMR" id="Q9FK76"/>
<dbReference type="FunCoup" id="Q9FK76">
    <property type="interactions" value="50"/>
</dbReference>
<dbReference type="STRING" id="3702.Q9FK76"/>
<dbReference type="MEROPS" id="S08.082"/>
<dbReference type="GlyCosmos" id="Q9FK76">
    <property type="glycosylation" value="6 sites, No reported glycans"/>
</dbReference>
<dbReference type="GlyGen" id="Q9FK76">
    <property type="glycosylation" value="7 sites"/>
</dbReference>
<dbReference type="iPTMnet" id="Q9FK76"/>
<dbReference type="PaxDb" id="3702-AT5G45650.1"/>
<dbReference type="ProteomicsDB" id="232930"/>
<dbReference type="EnsemblPlants" id="AT5G45650.1">
    <property type="protein sequence ID" value="AT5G45650.1"/>
    <property type="gene ID" value="AT5G45650"/>
</dbReference>
<dbReference type="EnsemblPlants" id="AT5G45650.2">
    <property type="protein sequence ID" value="AT5G45650.2"/>
    <property type="gene ID" value="AT5G45650"/>
</dbReference>
<dbReference type="GeneID" id="834605"/>
<dbReference type="Gramene" id="AT5G45650.1">
    <property type="protein sequence ID" value="AT5G45650.1"/>
    <property type="gene ID" value="AT5G45650"/>
</dbReference>
<dbReference type="Gramene" id="AT5G45650.2">
    <property type="protein sequence ID" value="AT5G45650.2"/>
    <property type="gene ID" value="AT5G45650"/>
</dbReference>
<dbReference type="KEGG" id="ath:AT5G45650"/>
<dbReference type="Araport" id="AT5G45650"/>
<dbReference type="TAIR" id="AT5G45650"/>
<dbReference type="eggNOG" id="ENOG502QRC5">
    <property type="taxonomic scope" value="Eukaryota"/>
</dbReference>
<dbReference type="HOGENOM" id="CLU_000625_4_6_1"/>
<dbReference type="InParanoid" id="Q9FK76"/>
<dbReference type="OMA" id="EEHHHSY"/>
<dbReference type="PhylomeDB" id="Q9FK76"/>
<dbReference type="PRO" id="PR:Q9FK76"/>
<dbReference type="Proteomes" id="UP000006548">
    <property type="component" value="Chromosome 5"/>
</dbReference>
<dbReference type="ExpressionAtlas" id="Q9FK76">
    <property type="expression patterns" value="baseline and differential"/>
</dbReference>
<dbReference type="GO" id="GO:0005576">
    <property type="term" value="C:extracellular region"/>
    <property type="evidence" value="ECO:0007669"/>
    <property type="project" value="UniProtKB-SubCell"/>
</dbReference>
<dbReference type="GO" id="GO:0004252">
    <property type="term" value="F:serine-type endopeptidase activity"/>
    <property type="evidence" value="ECO:0007669"/>
    <property type="project" value="InterPro"/>
</dbReference>
<dbReference type="GO" id="GO:0006508">
    <property type="term" value="P:proteolysis"/>
    <property type="evidence" value="ECO:0007669"/>
    <property type="project" value="UniProtKB-KW"/>
</dbReference>
<dbReference type="CDD" id="cd02120">
    <property type="entry name" value="PA_subtilisin_like"/>
    <property type="match status" value="1"/>
</dbReference>
<dbReference type="CDD" id="cd04852">
    <property type="entry name" value="Peptidases_S8_3"/>
    <property type="match status" value="1"/>
</dbReference>
<dbReference type="FunFam" id="3.40.50.200:FF:000006">
    <property type="entry name" value="Subtilisin-like protease SBT1.5"/>
    <property type="match status" value="1"/>
</dbReference>
<dbReference type="FunFam" id="3.50.30.30:FF:000005">
    <property type="entry name" value="subtilisin-like protease SBT1.5"/>
    <property type="match status" value="1"/>
</dbReference>
<dbReference type="FunFam" id="3.30.70.80:FF:000002">
    <property type="entry name" value="Subtilisin-like protease SBT5.3"/>
    <property type="match status" value="1"/>
</dbReference>
<dbReference type="Gene3D" id="2.60.40.2310">
    <property type="match status" value="1"/>
</dbReference>
<dbReference type="Gene3D" id="3.50.30.30">
    <property type="match status" value="1"/>
</dbReference>
<dbReference type="Gene3D" id="3.30.70.80">
    <property type="entry name" value="Peptidase S8 propeptide/proteinase inhibitor I9"/>
    <property type="match status" value="1"/>
</dbReference>
<dbReference type="Gene3D" id="3.40.50.200">
    <property type="entry name" value="Peptidase S8/S53 domain"/>
    <property type="match status" value="1"/>
</dbReference>
<dbReference type="InterPro" id="IPR003137">
    <property type="entry name" value="PA_domain"/>
</dbReference>
<dbReference type="InterPro" id="IPR000209">
    <property type="entry name" value="Peptidase_S8/S53_dom"/>
</dbReference>
<dbReference type="InterPro" id="IPR036852">
    <property type="entry name" value="Peptidase_S8/S53_dom_sf"/>
</dbReference>
<dbReference type="InterPro" id="IPR023828">
    <property type="entry name" value="Peptidase_S8_Ser-AS"/>
</dbReference>
<dbReference type="InterPro" id="IPR015500">
    <property type="entry name" value="Peptidase_S8_subtilisin-rel"/>
</dbReference>
<dbReference type="InterPro" id="IPR034197">
    <property type="entry name" value="Peptidases_S8_3"/>
</dbReference>
<dbReference type="InterPro" id="IPR010259">
    <property type="entry name" value="S8pro/Inhibitor_I9"/>
</dbReference>
<dbReference type="InterPro" id="IPR037045">
    <property type="entry name" value="S8pro/Inhibitor_I9_sf"/>
</dbReference>
<dbReference type="InterPro" id="IPR045051">
    <property type="entry name" value="SBT"/>
</dbReference>
<dbReference type="InterPro" id="IPR041469">
    <property type="entry name" value="Subtilisin-like_FN3"/>
</dbReference>
<dbReference type="PANTHER" id="PTHR10795">
    <property type="entry name" value="PROPROTEIN CONVERTASE SUBTILISIN/KEXIN"/>
    <property type="match status" value="1"/>
</dbReference>
<dbReference type="Pfam" id="PF17766">
    <property type="entry name" value="fn3_6"/>
    <property type="match status" value="1"/>
</dbReference>
<dbReference type="Pfam" id="PF05922">
    <property type="entry name" value="Inhibitor_I9"/>
    <property type="match status" value="1"/>
</dbReference>
<dbReference type="Pfam" id="PF02225">
    <property type="entry name" value="PA"/>
    <property type="match status" value="1"/>
</dbReference>
<dbReference type="Pfam" id="PF00082">
    <property type="entry name" value="Peptidase_S8"/>
    <property type="match status" value="1"/>
</dbReference>
<dbReference type="PRINTS" id="PR00723">
    <property type="entry name" value="SUBTILISIN"/>
</dbReference>
<dbReference type="SUPFAM" id="SSF52743">
    <property type="entry name" value="Subtilisin-like"/>
    <property type="match status" value="1"/>
</dbReference>
<dbReference type="PROSITE" id="PS51892">
    <property type="entry name" value="SUBTILASE"/>
    <property type="match status" value="1"/>
</dbReference>
<dbReference type="PROSITE" id="PS00138">
    <property type="entry name" value="SUBTILASE_SER"/>
    <property type="match status" value="1"/>
</dbReference>
<reference key="1">
    <citation type="journal article" date="1998" name="DNA Res.">
        <title>Structural analysis of Arabidopsis thaliana chromosome 5. VI. Sequence features of the regions of 1,367,185 bp covered by 19 physically assigned P1 and TAC clones.</title>
        <authorList>
            <person name="Kotani H."/>
            <person name="Nakamura Y."/>
            <person name="Sato S."/>
            <person name="Asamizu E."/>
            <person name="Kaneko T."/>
            <person name="Miyajima N."/>
            <person name="Tabata S."/>
        </authorList>
    </citation>
    <scope>NUCLEOTIDE SEQUENCE [LARGE SCALE GENOMIC DNA]</scope>
    <source>
        <strain>cv. Columbia</strain>
    </source>
</reference>
<reference key="2">
    <citation type="journal article" date="2017" name="Plant J.">
        <title>Araport11: a complete reannotation of the Arabidopsis thaliana reference genome.</title>
        <authorList>
            <person name="Cheng C.Y."/>
            <person name="Krishnakumar V."/>
            <person name="Chan A.P."/>
            <person name="Thibaud-Nissen F."/>
            <person name="Schobel S."/>
            <person name="Town C.D."/>
        </authorList>
    </citation>
    <scope>GENOME REANNOTATION</scope>
    <source>
        <strain>cv. Columbia</strain>
    </source>
</reference>
<reference key="3">
    <citation type="journal article" date="2002" name="Science">
        <title>Functional annotation of a full-length Arabidopsis cDNA collection.</title>
        <authorList>
            <person name="Seki M."/>
            <person name="Narusaka M."/>
            <person name="Kamiya A."/>
            <person name="Ishida J."/>
            <person name="Satou M."/>
            <person name="Sakurai T."/>
            <person name="Nakajima M."/>
            <person name="Enju A."/>
            <person name="Akiyama K."/>
            <person name="Oono Y."/>
            <person name="Muramatsu M."/>
            <person name="Hayashizaki Y."/>
            <person name="Kawai J."/>
            <person name="Carninci P."/>
            <person name="Itoh M."/>
            <person name="Ishii Y."/>
            <person name="Arakawa T."/>
            <person name="Shibata K."/>
            <person name="Shinagawa A."/>
            <person name="Shinozaki K."/>
        </authorList>
    </citation>
    <scope>NUCLEOTIDE SEQUENCE [LARGE SCALE MRNA]</scope>
    <source>
        <strain>cv. Columbia</strain>
    </source>
</reference>
<reference key="4">
    <citation type="journal article" date="2003" name="Science">
        <title>Empirical analysis of transcriptional activity in the Arabidopsis genome.</title>
        <authorList>
            <person name="Yamada K."/>
            <person name="Lim J."/>
            <person name="Dale J.M."/>
            <person name="Chen H."/>
            <person name="Shinn P."/>
            <person name="Palm C.J."/>
            <person name="Southwick A.M."/>
            <person name="Wu H.C."/>
            <person name="Kim C.J."/>
            <person name="Nguyen M."/>
            <person name="Pham P.K."/>
            <person name="Cheuk R.F."/>
            <person name="Karlin-Newmann G."/>
            <person name="Liu S.X."/>
            <person name="Lam B."/>
            <person name="Sakano H."/>
            <person name="Wu T."/>
            <person name="Yu G."/>
            <person name="Miranda M."/>
            <person name="Quach H.L."/>
            <person name="Tripp M."/>
            <person name="Chang C.H."/>
            <person name="Lee J.M."/>
            <person name="Toriumi M.J."/>
            <person name="Chan M.M."/>
            <person name="Tang C.C."/>
            <person name="Onodera C.S."/>
            <person name="Deng J.M."/>
            <person name="Akiyama K."/>
            <person name="Ansari Y."/>
            <person name="Arakawa T."/>
            <person name="Banh J."/>
            <person name="Banno F."/>
            <person name="Bowser L."/>
            <person name="Brooks S.Y."/>
            <person name="Carninci P."/>
            <person name="Chao Q."/>
            <person name="Choy N."/>
            <person name="Enju A."/>
            <person name="Goldsmith A.D."/>
            <person name="Gurjal M."/>
            <person name="Hansen N.F."/>
            <person name="Hayashizaki Y."/>
            <person name="Johnson-Hopson C."/>
            <person name="Hsuan V.W."/>
            <person name="Iida K."/>
            <person name="Karnes M."/>
            <person name="Khan S."/>
            <person name="Koesema E."/>
            <person name="Ishida J."/>
            <person name="Jiang P.X."/>
            <person name="Jones T."/>
            <person name="Kawai J."/>
            <person name="Kamiya A."/>
            <person name="Meyers C."/>
            <person name="Nakajima M."/>
            <person name="Narusaka M."/>
            <person name="Seki M."/>
            <person name="Sakurai T."/>
            <person name="Satou M."/>
            <person name="Tamse R."/>
            <person name="Vaysberg M."/>
            <person name="Wallender E.K."/>
            <person name="Wong C."/>
            <person name="Yamamura Y."/>
            <person name="Yuan S."/>
            <person name="Shinozaki K."/>
            <person name="Davis R.W."/>
            <person name="Theologis A."/>
            <person name="Ecker J.R."/>
        </authorList>
    </citation>
    <scope>NUCLEOTIDE SEQUENCE [LARGE SCALE MRNA]</scope>
    <source>
        <strain>cv. Columbia</strain>
    </source>
</reference>
<reference key="5">
    <citation type="journal article" date="2005" name="PLoS Comput. Biol.">
        <title>Inferring hypotheses on functional relationships of genes: Analysis of the Arabidopsis thaliana subtilase gene family.</title>
        <authorList>
            <person name="Rautengarten C."/>
            <person name="Steinhauser D."/>
            <person name="Bussis D."/>
            <person name="Stintzi A."/>
            <person name="Schaller A."/>
            <person name="Kopka J."/>
            <person name="Altmann T."/>
        </authorList>
    </citation>
    <scope>GENE FAMILY</scope>
    <scope>NOMENCLATURE</scope>
</reference>
<evidence type="ECO:0000250" key="1">
    <source>
        <dbReference type="UniProtKB" id="Q39547"/>
    </source>
</evidence>
<evidence type="ECO:0000250" key="2">
    <source>
        <dbReference type="UniProtKB" id="Q84WS0"/>
    </source>
</evidence>
<evidence type="ECO:0000255" key="3"/>
<evidence type="ECO:0000255" key="4">
    <source>
        <dbReference type="PROSITE-ProRule" id="PRU00498"/>
    </source>
</evidence>
<evidence type="ECO:0000255" key="5">
    <source>
        <dbReference type="PROSITE-ProRule" id="PRU01240"/>
    </source>
</evidence>
<evidence type="ECO:0000255" key="6">
    <source>
        <dbReference type="PROSITE-ProRule" id="PRU10082"/>
    </source>
</evidence>
<evidence type="ECO:0000303" key="7">
    <source>
    </source>
</evidence>
<evidence type="ECO:0000305" key="8"/>
<evidence type="ECO:0000312" key="9">
    <source>
        <dbReference type="Araport" id="AT5G45650"/>
    </source>
</evidence>
<evidence type="ECO:0000312" key="10">
    <source>
        <dbReference type="EMBL" id="BAB09208.1"/>
    </source>
</evidence>
<sequence length="791" mass="85146">MKKLTSLFPLLFLIPLLASCAEEKQVYIVYFGEHKGDKAFHEIEEHHHSYLQSVKESEEDARASLLYSYKHSINGFAAELTPDQASKLEKLAEVVSVFKSHPRKYEAHTTRSWEFVGLEEEETDSDVPRRKNDADDRFRVGRNFLKKAKHGDGIIVGVLDSGVWPESKSFNDKGMGPVPKSWKGICQTGVAFNSSHCNRKIIGARYYVKGYERYYGAFNATANKDFLSPRDPDGHGSHTASTAVGRRVLGASALGGFAKGSASGGAPLARLAIYKACWAKPNAEKVEGNICLEEDMLAAIDDAIADGVHVISISIGTTEPFPFTQDGIAMGALHAVKRNIVVAASAGNSGPKPGTLSNLAPWIITVGASTLDRAFVGGLVLGNGYTIKTDSITAFKMDKFAPLVYASNVVVPGIALNETSQCLPNSLKPELVSGKVVLCLRGAGSRIGKGMEVKRAGGAGMILGNIAANGNEVPSDSHFVPTAGVTPTVVDKILEYIKTDKNPKAFIKPGKTVYKYQAAPSMTGFSSRGPNVVDPNILKPDITAPGLYILAAWSGADSPSKMSVDQRVAGYNIYSGTSMSCPHVAGAIALLKAIHPKWSSAAIRSALMTTAWMTNDKKKPIQDTTGLPANPFALGSGHFRPTKAADPGLVYDASYRAYLLYGCSVNITNIDPTFKCPSKIPPGYNHNYPSIAVPNLKKTVTVKRTVTNVGTGNSTSTYLFSVKPPSGISVKAIPNILSFNRIGQKQRFKIVIKPLKNQVMNATEKGQYQFGWFSWTDKVHVVRSPIAVSLA</sequence>
<feature type="signal peptide" evidence="3">
    <location>
        <begin position="1"/>
        <end position="20"/>
    </location>
</feature>
<feature type="propeptide" id="PRO_0000435259" description="Activation peptide" evidence="1">
    <location>
        <begin position="21"/>
        <end position="108"/>
    </location>
</feature>
<feature type="chain" id="PRO_5004325448" description="Subtilisin-like protease SBT5.6" evidence="3">
    <location>
        <begin position="109"/>
        <end status="unknown"/>
    </location>
</feature>
<feature type="propeptide" id="PRO_0000435260" evidence="1">
    <location>
        <begin status="unknown"/>
        <end position="791"/>
    </location>
</feature>
<feature type="domain" description="Inhibitor I9" evidence="3">
    <location>
        <begin position="26"/>
        <end position="104"/>
    </location>
</feature>
<feature type="domain" description="Peptidase S8" evidence="5">
    <location>
        <begin position="134"/>
        <end position="645"/>
    </location>
</feature>
<feature type="domain" description="PA" evidence="3">
    <location>
        <begin position="400"/>
        <end position="494"/>
    </location>
</feature>
<feature type="active site" description="Charge relay system" evidence="5">
    <location>
        <position position="160"/>
    </location>
</feature>
<feature type="active site" description="Charge relay system" evidence="5">
    <location>
        <position position="235"/>
    </location>
</feature>
<feature type="active site" description="Charge relay system" evidence="5">
    <location>
        <position position="578"/>
    </location>
</feature>
<feature type="glycosylation site" description="N-linked (GlcNAc...) asparagine" evidence="4">
    <location>
        <position position="193"/>
    </location>
</feature>
<feature type="glycosylation site" description="N-linked (GlcNAc...) asparagine" evidence="4">
    <location>
        <position position="219"/>
    </location>
</feature>
<feature type="glycosylation site" description="N-linked (GlcNAc...) asparagine" evidence="4">
    <location>
        <position position="417"/>
    </location>
</feature>
<feature type="glycosylation site" description="N-linked (GlcNAc...) asparagine" evidence="4">
    <location>
        <position position="666"/>
    </location>
</feature>
<feature type="glycosylation site" description="N-linked (GlcNAc...) asparagine" evidence="4">
    <location>
        <position position="713"/>
    </location>
</feature>
<feature type="glycosylation site" description="N-linked (GlcNAc...) asparagine" evidence="4">
    <location>
        <position position="761"/>
    </location>
</feature>
<organism>
    <name type="scientific">Arabidopsis thaliana</name>
    <name type="common">Mouse-ear cress</name>
    <dbReference type="NCBI Taxonomy" id="3702"/>
    <lineage>
        <taxon>Eukaryota</taxon>
        <taxon>Viridiplantae</taxon>
        <taxon>Streptophyta</taxon>
        <taxon>Embryophyta</taxon>
        <taxon>Tracheophyta</taxon>
        <taxon>Spermatophyta</taxon>
        <taxon>Magnoliopsida</taxon>
        <taxon>eudicotyledons</taxon>
        <taxon>Gunneridae</taxon>
        <taxon>Pentapetalae</taxon>
        <taxon>rosids</taxon>
        <taxon>malvids</taxon>
        <taxon>Brassicales</taxon>
        <taxon>Brassicaceae</taxon>
        <taxon>Camelineae</taxon>
        <taxon>Arabidopsis</taxon>
    </lineage>
</organism>
<protein>
    <recommendedName>
        <fullName evidence="7">Subtilisin-like protease SBT5.6</fullName>
        <ecNumber evidence="6">3.4.21.-</ecNumber>
    </recommendedName>
    <alternativeName>
        <fullName evidence="7">Subtilase subfamily 5 member 6</fullName>
        <shortName evidence="7">AtSBT5.6</shortName>
    </alternativeName>
</protein>